<accession>Q07914</accession>
<accession>D6VY10</accession>
<comment type="function">
    <text evidence="4 5 6">Essential component of the PAM complex, a complex required for the translocation of transit peptide-containing proteins from the inner membrane into the mitochondrial matrix in an ATP-dependent manner. In the complex, it is required to stimulate activity of mtHSP70 (SSC1).</text>
</comment>
<comment type="subunit">
    <text evidence="4 6 7 8 9 10">Homodimer and heterodimer with PAM16/TIM16. Homodimerization may not be relevant in vivo, while heterodimerization is essential for activity regulation of mtHSP70. Component of the PAM complex, at least composed of mtHsp70, MGE1, TIM44, PAM16, PAM17 and PAM18/TIM14. Interacts directly with mtHsp70. Interacts directly with TIM17 subunit of the TIM23 complex.</text>
</comment>
<comment type="interaction">
    <interactant intactId="EBI-31963">
        <id>Q07914</id>
    </interactant>
    <interactant intactId="EBI-26019">
        <id>P42949</id>
        <label>PAM16</label>
    </interactant>
    <organismsDiffer>false</organismsDiffer>
    <experiments>6</experiments>
</comment>
<comment type="interaction">
    <interactant intactId="EBI-31963">
        <id>Q07914</id>
    </interactant>
    <interactant intactId="EBI-9127">
        <id>P39515</id>
        <label>TIM17</label>
    </interactant>
    <organismsDiffer>false</organismsDiffer>
    <experiments>3</experiments>
</comment>
<comment type="subcellular location">
    <subcellularLocation>
        <location evidence="4 5 6">Mitochondrion inner membrane</location>
        <topology evidence="4 5 6">Single-pass membrane protein</topology>
    </subcellularLocation>
</comment>
<comment type="domain">
    <text evidence="9">The J domain is essential for co-chaperone activity and mediates the heterodimerization with the J-like domain of PAM16.</text>
</comment>
<comment type="similarity">
    <text evidence="11">Belongs to the TIM14 family.</text>
</comment>
<dbReference type="EMBL" id="Z73180">
    <property type="protein sequence ID" value="CAA97530.1"/>
    <property type="molecule type" value="Genomic_DNA"/>
</dbReference>
<dbReference type="EMBL" id="AY558196">
    <property type="protein sequence ID" value="AAS56522.1"/>
    <property type="molecule type" value="Genomic_DNA"/>
</dbReference>
<dbReference type="EMBL" id="BK006945">
    <property type="protein sequence ID" value="DAA09326.1"/>
    <property type="molecule type" value="Genomic_DNA"/>
</dbReference>
<dbReference type="PIR" id="S64830">
    <property type="entry name" value="S64830"/>
</dbReference>
<dbReference type="RefSeq" id="NP_013108.1">
    <property type="nucleotide sequence ID" value="NM_001181895.1"/>
</dbReference>
<dbReference type="PDB" id="2GUZ">
    <property type="method" value="X-ray"/>
    <property type="resolution" value="2.00 A"/>
    <property type="chains" value="A/C/E/G/I/K/M/O=99-168"/>
</dbReference>
<dbReference type="PDBsum" id="2GUZ"/>
<dbReference type="SMR" id="Q07914"/>
<dbReference type="BioGRID" id="31281">
    <property type="interactions" value="219"/>
</dbReference>
<dbReference type="ComplexPortal" id="CPX-539">
    <property type="entry name" value="TIM23 mitochondrial inner membrane pre-sequence translocase complex, motor variant"/>
</dbReference>
<dbReference type="DIP" id="DIP-2125N"/>
<dbReference type="FunCoup" id="Q07914">
    <property type="interactions" value="73"/>
</dbReference>
<dbReference type="IntAct" id="Q07914">
    <property type="interactions" value="24"/>
</dbReference>
<dbReference type="MINT" id="Q07914"/>
<dbReference type="STRING" id="4932.YLR008C"/>
<dbReference type="TCDB" id="3.A.8.1.1">
    <property type="family name" value="the mitochondrial protein translocase (mpt) family"/>
</dbReference>
<dbReference type="iPTMnet" id="Q07914"/>
<dbReference type="PaxDb" id="4932-YLR008C"/>
<dbReference type="PeptideAtlas" id="Q07914"/>
<dbReference type="EnsemblFungi" id="YLR008C_mRNA">
    <property type="protein sequence ID" value="YLR008C"/>
    <property type="gene ID" value="YLR008C"/>
</dbReference>
<dbReference type="GeneID" id="850694"/>
<dbReference type="KEGG" id="sce:YLR008C"/>
<dbReference type="AGR" id="SGD:S000003998"/>
<dbReference type="SGD" id="S000003998">
    <property type="gene designation" value="PAM18"/>
</dbReference>
<dbReference type="VEuPathDB" id="FungiDB:YLR008C"/>
<dbReference type="eggNOG" id="KOG0723">
    <property type="taxonomic scope" value="Eukaryota"/>
</dbReference>
<dbReference type="GeneTree" id="ENSGT00940000171836"/>
<dbReference type="HOGENOM" id="CLU_017633_13_0_1"/>
<dbReference type="InParanoid" id="Q07914"/>
<dbReference type="OMA" id="EGSAEWY"/>
<dbReference type="OrthoDB" id="240298at2759"/>
<dbReference type="BioCyc" id="YEAST:G3O-32169-MONOMER"/>
<dbReference type="BioGRID-ORCS" id="850694">
    <property type="hits" value="6 hits in 10 CRISPR screens"/>
</dbReference>
<dbReference type="EvolutionaryTrace" id="Q07914"/>
<dbReference type="PRO" id="PR:Q07914"/>
<dbReference type="Proteomes" id="UP000002311">
    <property type="component" value="Chromosome XII"/>
</dbReference>
<dbReference type="RNAct" id="Q07914">
    <property type="molecule type" value="protein"/>
</dbReference>
<dbReference type="GO" id="GO:0005743">
    <property type="term" value="C:mitochondrial inner membrane"/>
    <property type="evidence" value="ECO:0000304"/>
    <property type="project" value="Reactome"/>
</dbReference>
<dbReference type="GO" id="GO:0005739">
    <property type="term" value="C:mitochondrion"/>
    <property type="evidence" value="ECO:0007005"/>
    <property type="project" value="SGD"/>
</dbReference>
<dbReference type="GO" id="GO:0001405">
    <property type="term" value="C:PAM complex, Tim23 associated import motor"/>
    <property type="evidence" value="ECO:0000314"/>
    <property type="project" value="SGD"/>
</dbReference>
<dbReference type="GO" id="GO:0005744">
    <property type="term" value="C:TIM23 mitochondrial import inner membrane translocase complex"/>
    <property type="evidence" value="ECO:0000314"/>
    <property type="project" value="SGD"/>
</dbReference>
<dbReference type="GO" id="GO:0001671">
    <property type="term" value="F:ATPase activator activity"/>
    <property type="evidence" value="ECO:0000314"/>
    <property type="project" value="SGD"/>
</dbReference>
<dbReference type="GO" id="GO:0006886">
    <property type="term" value="P:intracellular protein transport"/>
    <property type="evidence" value="ECO:0000303"/>
    <property type="project" value="ComplexPortal"/>
</dbReference>
<dbReference type="GO" id="GO:0030150">
    <property type="term" value="P:protein import into mitochondrial matrix"/>
    <property type="evidence" value="ECO:0000315"/>
    <property type="project" value="SGD"/>
</dbReference>
<dbReference type="CDD" id="cd06257">
    <property type="entry name" value="DnaJ"/>
    <property type="match status" value="1"/>
</dbReference>
<dbReference type="FunFam" id="1.10.287.110:FF:000001">
    <property type="entry name" value="Import inner membrane translocase subunit tim14"/>
    <property type="match status" value="1"/>
</dbReference>
<dbReference type="Gene3D" id="1.10.287.110">
    <property type="entry name" value="DnaJ domain"/>
    <property type="match status" value="1"/>
</dbReference>
<dbReference type="InterPro" id="IPR001623">
    <property type="entry name" value="DnaJ_domain"/>
</dbReference>
<dbReference type="InterPro" id="IPR036869">
    <property type="entry name" value="J_dom_sf"/>
</dbReference>
<dbReference type="PANTHER" id="PTHR12763">
    <property type="match status" value="1"/>
</dbReference>
<dbReference type="PANTHER" id="PTHR12763:SF28">
    <property type="entry name" value="GEO10507P1-RELATED"/>
    <property type="match status" value="1"/>
</dbReference>
<dbReference type="SMART" id="SM00271">
    <property type="entry name" value="DnaJ"/>
    <property type="match status" value="1"/>
</dbReference>
<dbReference type="SUPFAM" id="SSF46565">
    <property type="entry name" value="Chaperone J-domain"/>
    <property type="match status" value="1"/>
</dbReference>
<dbReference type="PROSITE" id="PS50076">
    <property type="entry name" value="DNAJ_2"/>
    <property type="match status" value="1"/>
</dbReference>
<sequence length="168" mass="17910">MSSQSNTGNSIEAPQLPIPGQTNGSANVTVDGAGVNVGIQNGSQGQKTGMDLYFDQALNYMGEHPVITGFGAFLTLYFTAGAYKSISKGLNGGKSTTAFLKGGFDPKMNSKEALQILNLTENTLTKKKLKEVHRKIMLANHPDKGGSPFLATKINEAKDFLEKRGISK</sequence>
<reference key="1">
    <citation type="journal article" date="1997" name="Nature">
        <title>The nucleotide sequence of Saccharomyces cerevisiae chromosome XII.</title>
        <authorList>
            <person name="Johnston M."/>
            <person name="Hillier L.W."/>
            <person name="Riles L."/>
            <person name="Albermann K."/>
            <person name="Andre B."/>
            <person name="Ansorge W."/>
            <person name="Benes V."/>
            <person name="Brueckner M."/>
            <person name="Delius H."/>
            <person name="Dubois E."/>
            <person name="Duesterhoeft A."/>
            <person name="Entian K.-D."/>
            <person name="Floeth M."/>
            <person name="Goffeau A."/>
            <person name="Hebling U."/>
            <person name="Heumann K."/>
            <person name="Heuss-Neitzel D."/>
            <person name="Hilbert H."/>
            <person name="Hilger F."/>
            <person name="Kleine K."/>
            <person name="Koetter P."/>
            <person name="Louis E.J."/>
            <person name="Messenguy F."/>
            <person name="Mewes H.-W."/>
            <person name="Miosga T."/>
            <person name="Moestl D."/>
            <person name="Mueller-Auer S."/>
            <person name="Nentwich U."/>
            <person name="Obermaier B."/>
            <person name="Piravandi E."/>
            <person name="Pohl T.M."/>
            <person name="Portetelle D."/>
            <person name="Purnelle B."/>
            <person name="Rechmann S."/>
            <person name="Rieger M."/>
            <person name="Rinke M."/>
            <person name="Rose M."/>
            <person name="Scharfe M."/>
            <person name="Scherens B."/>
            <person name="Scholler P."/>
            <person name="Schwager C."/>
            <person name="Schwarz S."/>
            <person name="Underwood A.P."/>
            <person name="Urrestarazu L.A."/>
            <person name="Vandenbol M."/>
            <person name="Verhasselt P."/>
            <person name="Vierendeels F."/>
            <person name="Voet M."/>
            <person name="Volckaert G."/>
            <person name="Voss H."/>
            <person name="Wambutt R."/>
            <person name="Wedler E."/>
            <person name="Wedler H."/>
            <person name="Zimmermann F.K."/>
            <person name="Zollner A."/>
            <person name="Hani J."/>
            <person name="Hoheisel J.D."/>
        </authorList>
    </citation>
    <scope>NUCLEOTIDE SEQUENCE [LARGE SCALE GENOMIC DNA]</scope>
    <source>
        <strain>ATCC 204508 / S288c</strain>
    </source>
</reference>
<reference key="2">
    <citation type="journal article" date="2014" name="G3 (Bethesda)">
        <title>The reference genome sequence of Saccharomyces cerevisiae: Then and now.</title>
        <authorList>
            <person name="Engel S.R."/>
            <person name="Dietrich F.S."/>
            <person name="Fisk D.G."/>
            <person name="Binkley G."/>
            <person name="Balakrishnan R."/>
            <person name="Costanzo M.C."/>
            <person name="Dwight S.S."/>
            <person name="Hitz B.C."/>
            <person name="Karra K."/>
            <person name="Nash R.S."/>
            <person name="Weng S."/>
            <person name="Wong E.D."/>
            <person name="Lloyd P."/>
            <person name="Skrzypek M.S."/>
            <person name="Miyasato S.R."/>
            <person name="Simison M."/>
            <person name="Cherry J.M."/>
        </authorList>
    </citation>
    <scope>GENOME REANNOTATION</scope>
    <source>
        <strain>ATCC 204508 / S288c</strain>
    </source>
</reference>
<reference key="3">
    <citation type="journal article" date="2007" name="Genome Res.">
        <title>Approaching a complete repository of sequence-verified protein-encoding clones for Saccharomyces cerevisiae.</title>
        <authorList>
            <person name="Hu Y."/>
            <person name="Rolfs A."/>
            <person name="Bhullar B."/>
            <person name="Murthy T.V.S."/>
            <person name="Zhu C."/>
            <person name="Berger M.F."/>
            <person name="Camargo A.A."/>
            <person name="Kelley F."/>
            <person name="McCarron S."/>
            <person name="Jepson D."/>
            <person name="Richardson A."/>
            <person name="Raphael J."/>
            <person name="Moreira D."/>
            <person name="Taycher E."/>
            <person name="Zuo D."/>
            <person name="Mohr S."/>
            <person name="Kane M.F."/>
            <person name="Williamson J."/>
            <person name="Simpson A.J.G."/>
            <person name="Bulyk M.L."/>
            <person name="Harlow E."/>
            <person name="Marsischky G."/>
            <person name="Kolodner R.D."/>
            <person name="LaBaer J."/>
        </authorList>
    </citation>
    <scope>NUCLEOTIDE SEQUENCE [GENOMIC DNA]</scope>
    <source>
        <strain>ATCC 204508 / S288c</strain>
    </source>
</reference>
<reference key="4">
    <citation type="journal article" date="2003" name="EMBO J.">
        <title>Tim14, a novel key component of the import motor of the TIM23 protein translocase of mitochondria.</title>
        <authorList>
            <person name="Mokranjac D."/>
            <person name="Sichting M."/>
            <person name="Neupert W."/>
            <person name="Hell K."/>
        </authorList>
    </citation>
    <scope>FUNCTION</scope>
    <scope>SUBCELLULAR LOCATION</scope>
    <scope>TOPOLOGY</scope>
    <scope>IDENTIFICATION IN THE PAM COMPLEX</scope>
    <scope>INTERACTION WITH SSC1 AND TIM17</scope>
    <scope>MUTAGENESIS OF HIS-141</scope>
</reference>
<reference key="5">
    <citation type="journal article" date="2003" name="J. Cell Biol.">
        <title>A J-protein is an essential subunit of the presequence translocase-associated protein import motor of mitochondria.</title>
        <authorList>
            <person name="Truscott K.N."/>
            <person name="Voos W."/>
            <person name="Frazier A.E."/>
            <person name="Lind M."/>
            <person name="Li Y."/>
            <person name="Geissler A."/>
            <person name="Dudek J."/>
            <person name="Mueller H."/>
            <person name="Sickmann A."/>
            <person name="Meyer H.E."/>
            <person name="Meisinger C."/>
            <person name="Guiard B."/>
            <person name="Rehling P."/>
            <person name="Pfanner N."/>
        </authorList>
    </citation>
    <scope>IDENTIFICATION BY MASS SPECTROMETRY</scope>
    <scope>IDENTIFICATION IN THE PAM COMPLEX</scope>
    <scope>FUNCTION</scope>
    <scope>SUBCELLULAR LOCATION</scope>
    <scope>TOPOLOGY</scope>
</reference>
<reference key="6">
    <citation type="journal article" date="2003" name="Proc. Natl. Acad. Sci. U.S.A.">
        <title>J protein cochaperone of the mitochondrial inner membrane required for protein import into the mitochondrial matrix.</title>
        <authorList>
            <person name="D'Silva P.D."/>
            <person name="Schilke B."/>
            <person name="Walter W."/>
            <person name="Andrew A."/>
            <person name="Craig E.A."/>
        </authorList>
    </citation>
    <scope>FUNCTION</scope>
    <scope>SUBCELLULAR LOCATION</scope>
    <scope>TOPOLOGY</scope>
    <scope>MUTAGENESIS OF 141-HIS--ASP-143 AND HIS-141</scope>
</reference>
<reference key="7">
    <citation type="journal article" date="2004" name="J. Biol. Chem.">
        <title>The presequence translocase-associated protein import motor of mitochondria. Pam16 functions in an antagonistic manner to Pam18.</title>
        <authorList>
            <person name="Li Y."/>
            <person name="Dudek J."/>
            <person name="Guiard B."/>
            <person name="Pfanner N."/>
            <person name="Rehling P."/>
            <person name="Voos W."/>
        </authorList>
    </citation>
    <scope>INTERACTION WITH PAM16</scope>
</reference>
<reference key="8">
    <citation type="journal article" date="2004" name="Nat. Struct. Mol. Biol.">
        <title>Pam16 has an essential role in the mitochondrial protein import motor.</title>
        <authorList>
            <person name="Frazier A.E."/>
            <person name="Dudek J."/>
            <person name="Guiard B."/>
            <person name="Voos W."/>
            <person name="Li Y."/>
            <person name="Lind M."/>
            <person name="Meisinger C."/>
            <person name="Geissler A."/>
            <person name="Sickmann A."/>
            <person name="Meyer H.E."/>
            <person name="Bilanchone V."/>
            <person name="Cumsky M.G."/>
            <person name="Truscott K.N."/>
            <person name="Pfanner N."/>
            <person name="Rehling P."/>
        </authorList>
    </citation>
    <scope>INTERACTION WITH PAM16</scope>
</reference>
<reference key="9">
    <citation type="journal article" date="2005" name="Mol. Cell. Biol.">
        <title>Pam17 is required for architecture and translocation activity of the mitochondrial protein import motor.</title>
        <authorList>
            <person name="van der Laan M."/>
            <person name="Chacinska A."/>
            <person name="Lind M."/>
            <person name="Perschil I."/>
            <person name="Sickmann A."/>
            <person name="Meyer H.E."/>
            <person name="Guiard B."/>
            <person name="Meisinger C."/>
            <person name="Pfanner N."/>
            <person name="Rehling P."/>
        </authorList>
    </citation>
    <scope>IDENTIFICATION IN THE PAM COMPLEX WITH PAM16; PAM17; TIM44; SSC1 AND MGE1</scope>
</reference>
<reference key="10">
    <citation type="journal article" date="2005" name="Proc. Natl. Acad. Sci. U.S.A.">
        <title>Role of Pam16's degenerate J domain in protein import across the mitochondrial inner membrane.</title>
        <authorList>
            <person name="D'Silva P.R."/>
            <person name="Schilke B."/>
            <person name="Walter W."/>
            <person name="Craig E.A."/>
        </authorList>
    </citation>
    <scope>SUBUNIT</scope>
    <scope>INTERACTION WITH PAM16</scope>
    <scope>DOMAIN</scope>
    <scope>MUTAGENESIS OF PRO-142; ASP-143; LYS-144 AND LEU-150</scope>
</reference>
<proteinExistence type="evidence at protein level"/>
<feature type="chain" id="PRO_0000071118" description="Mitochondrial import inner membrane translocase subunit TIM14">
    <location>
        <begin position="1"/>
        <end position="168"/>
    </location>
</feature>
<feature type="topological domain" description="Mitochondrial intermembrane" evidence="1">
    <location>
        <begin position="1"/>
        <end position="65"/>
    </location>
</feature>
<feature type="transmembrane region" description="Helical" evidence="1">
    <location>
        <begin position="66"/>
        <end position="83"/>
    </location>
</feature>
<feature type="topological domain" description="Mitochondrial matrix" evidence="1">
    <location>
        <begin position="84"/>
        <end position="168"/>
    </location>
</feature>
<feature type="domain" description="J" evidence="2">
    <location>
        <begin position="112"/>
        <end position="168"/>
    </location>
</feature>
<feature type="region of interest" description="Disordered" evidence="3">
    <location>
        <begin position="1"/>
        <end position="29"/>
    </location>
</feature>
<feature type="compositionally biased region" description="Polar residues" evidence="3">
    <location>
        <begin position="1"/>
        <end position="12"/>
    </location>
</feature>
<feature type="mutagenesis site" description="Induces lethality." evidence="5">
    <original>HPD</original>
    <variation>AAA</variation>
    <location>
        <begin position="141"/>
        <end position="143"/>
    </location>
</feature>
<feature type="mutagenesis site" description="Induces lethality." evidence="4 5">
    <original>H</original>
    <variation>Q</variation>
    <location>
        <position position="141"/>
    </location>
</feature>
<feature type="mutagenesis site" description="Induces a strong reduction in ability to stimulate mtHSP70 activity but does not affect import of proteins into mitochondrial matrix." evidence="9">
    <original>P</original>
    <variation>A</variation>
    <location>
        <position position="142"/>
    </location>
</feature>
<feature type="mutagenesis site" description="Induces lethality." evidence="9">
    <original>D</original>
    <variation>N</variation>
    <location>
        <position position="143"/>
    </location>
</feature>
<feature type="mutagenesis site" description="Induces a strong reduction in ability to stimulate mtHSP70 activity but does not affect import of proteins into mitochondrial matrix." evidence="9">
    <original>K</original>
    <variation>Q</variation>
    <location>
        <position position="144"/>
    </location>
</feature>
<feature type="mutagenesis site" description="Temperature-sensitive mutant that impairs heterodimerization with PAM16 and import of proteins into mitochondrial matrix when incubated at 37 degrees Celsius." evidence="9">
    <original>L</original>
    <variation>W</variation>
    <location>
        <position position="150"/>
    </location>
</feature>
<feature type="helix" evidence="12">
    <location>
        <begin position="110"/>
        <end position="116"/>
    </location>
</feature>
<feature type="turn" evidence="12">
    <location>
        <begin position="121"/>
        <end position="123"/>
    </location>
</feature>
<feature type="helix" evidence="12">
    <location>
        <begin position="126"/>
        <end position="140"/>
    </location>
</feature>
<feature type="helix" evidence="12">
    <location>
        <begin position="142"/>
        <end position="144"/>
    </location>
</feature>
<feature type="helix" evidence="12">
    <location>
        <begin position="148"/>
        <end position="164"/>
    </location>
</feature>
<organism>
    <name type="scientific">Saccharomyces cerevisiae (strain ATCC 204508 / S288c)</name>
    <name type="common">Baker's yeast</name>
    <dbReference type="NCBI Taxonomy" id="559292"/>
    <lineage>
        <taxon>Eukaryota</taxon>
        <taxon>Fungi</taxon>
        <taxon>Dikarya</taxon>
        <taxon>Ascomycota</taxon>
        <taxon>Saccharomycotina</taxon>
        <taxon>Saccharomycetes</taxon>
        <taxon>Saccharomycetales</taxon>
        <taxon>Saccharomycetaceae</taxon>
        <taxon>Saccharomyces</taxon>
    </lineage>
</organism>
<keyword id="KW-0002">3D-structure</keyword>
<keyword id="KW-0143">Chaperone</keyword>
<keyword id="KW-0472">Membrane</keyword>
<keyword id="KW-0496">Mitochondrion</keyword>
<keyword id="KW-0999">Mitochondrion inner membrane</keyword>
<keyword id="KW-0653">Protein transport</keyword>
<keyword id="KW-1185">Reference proteome</keyword>
<keyword id="KW-0811">Translocation</keyword>
<keyword id="KW-0812">Transmembrane</keyword>
<keyword id="KW-1133">Transmembrane helix</keyword>
<keyword id="KW-0813">Transport</keyword>
<protein>
    <recommendedName>
        <fullName>Mitochondrial import inner membrane translocase subunit TIM14</fullName>
    </recommendedName>
    <alternativeName>
        <fullName>Presequence translocated-associated motor subunit PAM18</fullName>
    </alternativeName>
</protein>
<gene>
    <name type="primary">PAM18</name>
    <name type="synonym">TIM14</name>
    <name type="ordered locus">YLR008C</name>
</gene>
<evidence type="ECO:0000255" key="1"/>
<evidence type="ECO:0000255" key="2">
    <source>
        <dbReference type="PROSITE-ProRule" id="PRU00286"/>
    </source>
</evidence>
<evidence type="ECO:0000256" key="3">
    <source>
        <dbReference type="SAM" id="MobiDB-lite"/>
    </source>
</evidence>
<evidence type="ECO:0000269" key="4">
    <source>
    </source>
</evidence>
<evidence type="ECO:0000269" key="5">
    <source>
    </source>
</evidence>
<evidence type="ECO:0000269" key="6">
    <source>
    </source>
</evidence>
<evidence type="ECO:0000269" key="7">
    <source>
    </source>
</evidence>
<evidence type="ECO:0000269" key="8">
    <source>
    </source>
</evidence>
<evidence type="ECO:0000269" key="9">
    <source>
    </source>
</evidence>
<evidence type="ECO:0000269" key="10">
    <source>
    </source>
</evidence>
<evidence type="ECO:0000305" key="11"/>
<evidence type="ECO:0007829" key="12">
    <source>
        <dbReference type="PDB" id="2GUZ"/>
    </source>
</evidence>
<name>TIM14_YEAST</name>